<dbReference type="EMBL" id="CP017624">
    <property type="protein sequence ID" value="AOW27082.1"/>
    <property type="molecule type" value="Genomic_DNA"/>
</dbReference>
<dbReference type="RefSeq" id="XP_719551.2">
    <property type="nucleotide sequence ID" value="XM_714458.2"/>
</dbReference>
<dbReference type="SMR" id="Q5ACW2"/>
<dbReference type="BioGRID" id="1221807">
    <property type="interactions" value="1"/>
</dbReference>
<dbReference type="FunCoup" id="Q5ACW2">
    <property type="interactions" value="315"/>
</dbReference>
<dbReference type="STRING" id="237561.Q5ACW2"/>
<dbReference type="EnsemblFungi" id="C2_00280C_A-T">
    <property type="protein sequence ID" value="C2_00280C_A-T-p1"/>
    <property type="gene ID" value="C2_00280C_A"/>
</dbReference>
<dbReference type="GeneID" id="3638802"/>
<dbReference type="KEGG" id="cal:CAALFM_C200280CA"/>
<dbReference type="CGD" id="CAL0000187163">
    <property type="gene designation" value="orf19.9653"/>
</dbReference>
<dbReference type="VEuPathDB" id="FungiDB:C2_00280C_A"/>
<dbReference type="eggNOG" id="KOG1813">
    <property type="taxonomic scope" value="Eukaryota"/>
</dbReference>
<dbReference type="HOGENOM" id="CLU_050460_3_0_1"/>
<dbReference type="InParanoid" id="Q5ACW2"/>
<dbReference type="OrthoDB" id="25761at2759"/>
<dbReference type="PRO" id="PR:Q5ACW2"/>
<dbReference type="Proteomes" id="UP000000559">
    <property type="component" value="Chromosome 2"/>
</dbReference>
<dbReference type="GO" id="GO:0000974">
    <property type="term" value="C:Prp19 complex"/>
    <property type="evidence" value="ECO:0007669"/>
    <property type="project" value="EnsemblFungi"/>
</dbReference>
<dbReference type="GO" id="GO:0005684">
    <property type="term" value="C:U2-type spliceosomal complex"/>
    <property type="evidence" value="ECO:0000318"/>
    <property type="project" value="GO_Central"/>
</dbReference>
<dbReference type="GO" id="GO:0003677">
    <property type="term" value="F:DNA binding"/>
    <property type="evidence" value="ECO:0007669"/>
    <property type="project" value="UniProtKB-KW"/>
</dbReference>
<dbReference type="GO" id="GO:0008270">
    <property type="term" value="F:zinc ion binding"/>
    <property type="evidence" value="ECO:0007669"/>
    <property type="project" value="UniProtKB-KW"/>
</dbReference>
<dbReference type="GO" id="GO:0000349">
    <property type="term" value="P:generation of catalytic spliceosome for first transesterification step"/>
    <property type="evidence" value="ECO:0007669"/>
    <property type="project" value="EnsemblFungi"/>
</dbReference>
<dbReference type="GO" id="GO:0034247">
    <property type="term" value="P:snoRNA splicing"/>
    <property type="evidence" value="ECO:0000318"/>
    <property type="project" value="GO_Central"/>
</dbReference>
<dbReference type="CDD" id="cd16539">
    <property type="entry name" value="RING-HC_RNF113A_B"/>
    <property type="match status" value="1"/>
</dbReference>
<dbReference type="Gene3D" id="4.10.1000.10">
    <property type="entry name" value="Zinc finger, CCCH-type"/>
    <property type="match status" value="1"/>
</dbReference>
<dbReference type="Gene3D" id="3.30.40.10">
    <property type="entry name" value="Zinc/RING finger domain, C3HC4 (zinc finger)"/>
    <property type="match status" value="1"/>
</dbReference>
<dbReference type="InterPro" id="IPR039971">
    <property type="entry name" value="CWC24-like"/>
</dbReference>
<dbReference type="InterPro" id="IPR027370">
    <property type="entry name" value="Znf-RING_euk"/>
</dbReference>
<dbReference type="InterPro" id="IPR000571">
    <property type="entry name" value="Znf_CCCH"/>
</dbReference>
<dbReference type="InterPro" id="IPR036855">
    <property type="entry name" value="Znf_CCCH_sf"/>
</dbReference>
<dbReference type="InterPro" id="IPR001841">
    <property type="entry name" value="Znf_RING"/>
</dbReference>
<dbReference type="InterPro" id="IPR013083">
    <property type="entry name" value="Znf_RING/FYVE/PHD"/>
</dbReference>
<dbReference type="PANTHER" id="PTHR12930:SF0">
    <property type="entry name" value="RING FINGER PROTEIN 113B"/>
    <property type="match status" value="1"/>
</dbReference>
<dbReference type="PANTHER" id="PTHR12930">
    <property type="entry name" value="ZINC FINGER PROTEIN 183"/>
    <property type="match status" value="1"/>
</dbReference>
<dbReference type="Pfam" id="PF00642">
    <property type="entry name" value="zf-CCCH"/>
    <property type="match status" value="1"/>
</dbReference>
<dbReference type="Pfam" id="PF13445">
    <property type="entry name" value="zf-RING_UBOX"/>
    <property type="match status" value="1"/>
</dbReference>
<dbReference type="SMART" id="SM00184">
    <property type="entry name" value="RING"/>
    <property type="match status" value="1"/>
</dbReference>
<dbReference type="SMART" id="SM00356">
    <property type="entry name" value="ZnF_C3H1"/>
    <property type="match status" value="1"/>
</dbReference>
<dbReference type="SUPFAM" id="SSF90229">
    <property type="entry name" value="CCCH zinc finger"/>
    <property type="match status" value="1"/>
</dbReference>
<dbReference type="SUPFAM" id="SSF57850">
    <property type="entry name" value="RING/U-box"/>
    <property type="match status" value="1"/>
</dbReference>
<dbReference type="PROSITE" id="PS50103">
    <property type="entry name" value="ZF_C3H1"/>
    <property type="match status" value="1"/>
</dbReference>
<dbReference type="PROSITE" id="PS50089">
    <property type="entry name" value="ZF_RING_2"/>
    <property type="match status" value="1"/>
</dbReference>
<gene>
    <name type="primary">CWC24</name>
    <name type="ordered locus">CAALFM_C200280CA</name>
    <name type="ORF">CaO19.2105</name>
    <name type="ORF">CaO19.9653</name>
</gene>
<feature type="chain" id="PRO_0000055885" description="Pre-mRNA-splicing factor CWC24">
    <location>
        <begin position="1"/>
        <end position="216"/>
    </location>
</feature>
<feature type="zinc finger region" description="C3H1-type" evidence="3">
    <location>
        <begin position="98"/>
        <end position="126"/>
    </location>
</feature>
<feature type="zinc finger region" description="RING-type" evidence="2">
    <location>
        <begin position="156"/>
        <end position="196"/>
    </location>
</feature>
<feature type="region of interest" description="Disordered" evidence="4">
    <location>
        <begin position="19"/>
        <end position="38"/>
    </location>
</feature>
<feature type="region of interest" description="Disordered" evidence="4">
    <location>
        <begin position="43"/>
        <end position="68"/>
    </location>
</feature>
<feature type="compositionally biased region" description="Low complexity" evidence="4">
    <location>
        <begin position="55"/>
        <end position="64"/>
    </location>
</feature>
<keyword id="KW-0238">DNA-binding</keyword>
<keyword id="KW-0479">Metal-binding</keyword>
<keyword id="KW-0507">mRNA processing</keyword>
<keyword id="KW-0508">mRNA splicing</keyword>
<keyword id="KW-0539">Nucleus</keyword>
<keyword id="KW-1185">Reference proteome</keyword>
<keyword id="KW-0747">Spliceosome</keyword>
<keyword id="KW-0862">Zinc</keyword>
<keyword id="KW-0863">Zinc-finger</keyword>
<organism>
    <name type="scientific">Candida albicans (strain SC5314 / ATCC MYA-2876)</name>
    <name type="common">Yeast</name>
    <dbReference type="NCBI Taxonomy" id="237561"/>
    <lineage>
        <taxon>Eukaryota</taxon>
        <taxon>Fungi</taxon>
        <taxon>Dikarya</taxon>
        <taxon>Ascomycota</taxon>
        <taxon>Saccharomycotina</taxon>
        <taxon>Pichiomycetes</taxon>
        <taxon>Debaryomycetaceae</taxon>
        <taxon>Candida/Lodderomyces clade</taxon>
        <taxon>Candida</taxon>
    </lineage>
</organism>
<evidence type="ECO:0000250" key="1"/>
<evidence type="ECO:0000255" key="2">
    <source>
        <dbReference type="PROSITE-ProRule" id="PRU00175"/>
    </source>
</evidence>
<evidence type="ECO:0000255" key="3">
    <source>
        <dbReference type="PROSITE-ProRule" id="PRU00723"/>
    </source>
</evidence>
<evidence type="ECO:0000256" key="4">
    <source>
        <dbReference type="SAM" id="MobiDB-lite"/>
    </source>
</evidence>
<evidence type="ECO:0000305" key="5"/>
<accession>Q5ACW2</accession>
<accession>A0A1D8PG25</accession>
<sequence length="216" mass="24232">MFKKRVIKDSRVSKRKIGDINEASEDAPDTQVTKKSTLITKKSDIQKKSVVMPRSSPQTPLSKSSSDDAAAVEVVSQKSKKGELKPLAANIKTTIITDFQPDVCKDFQQTGYCGYGDTCKFLHVRDESRQKIPIKKDWEIGGQKEVKEKEDIPFKCVLCKSDYKSPIKTECGHIFCKACFLDRYKAKKKGTCFICHKETNGTMVPVNIDKLSATQV</sequence>
<comment type="function">
    <text evidence="1">Involved in pre-mRNA splicing.</text>
</comment>
<comment type="subunit">
    <text evidence="1">Associated with the spliceosome.</text>
</comment>
<comment type="subcellular location">
    <subcellularLocation>
        <location evidence="1">Nucleus</location>
    </subcellularLocation>
</comment>
<comment type="similarity">
    <text evidence="5">Belongs to the CWC24 family.</text>
</comment>
<protein>
    <recommendedName>
        <fullName>Pre-mRNA-splicing factor CWC24</fullName>
    </recommendedName>
</protein>
<reference key="1">
    <citation type="journal article" date="2004" name="Proc. Natl. Acad. Sci. U.S.A.">
        <title>The diploid genome sequence of Candida albicans.</title>
        <authorList>
            <person name="Jones T."/>
            <person name="Federspiel N.A."/>
            <person name="Chibana H."/>
            <person name="Dungan J."/>
            <person name="Kalman S."/>
            <person name="Magee B.B."/>
            <person name="Newport G."/>
            <person name="Thorstenson Y.R."/>
            <person name="Agabian N."/>
            <person name="Magee P.T."/>
            <person name="Davis R.W."/>
            <person name="Scherer S."/>
        </authorList>
    </citation>
    <scope>NUCLEOTIDE SEQUENCE [LARGE SCALE GENOMIC DNA]</scope>
    <source>
        <strain>SC5314 / ATCC MYA-2876</strain>
    </source>
</reference>
<reference key="2">
    <citation type="journal article" date="2007" name="Genome Biol.">
        <title>Assembly of the Candida albicans genome into sixteen supercontigs aligned on the eight chromosomes.</title>
        <authorList>
            <person name="van het Hoog M."/>
            <person name="Rast T.J."/>
            <person name="Martchenko M."/>
            <person name="Grindle S."/>
            <person name="Dignard D."/>
            <person name="Hogues H."/>
            <person name="Cuomo C."/>
            <person name="Berriman M."/>
            <person name="Scherer S."/>
            <person name="Magee B.B."/>
            <person name="Whiteway M."/>
            <person name="Chibana H."/>
            <person name="Nantel A."/>
            <person name="Magee P.T."/>
        </authorList>
    </citation>
    <scope>GENOME REANNOTATION</scope>
    <source>
        <strain>SC5314 / ATCC MYA-2876</strain>
    </source>
</reference>
<reference key="3">
    <citation type="journal article" date="2013" name="Genome Biol.">
        <title>Assembly of a phased diploid Candida albicans genome facilitates allele-specific measurements and provides a simple model for repeat and indel structure.</title>
        <authorList>
            <person name="Muzzey D."/>
            <person name="Schwartz K."/>
            <person name="Weissman J.S."/>
            <person name="Sherlock G."/>
        </authorList>
    </citation>
    <scope>NUCLEOTIDE SEQUENCE [LARGE SCALE GENOMIC DNA]</scope>
    <scope>GENOME REANNOTATION</scope>
    <source>
        <strain>SC5314 / ATCC MYA-2876</strain>
    </source>
</reference>
<name>CWC24_CANAL</name>
<proteinExistence type="inferred from homology"/>